<comment type="function">
    <text evidence="3">Probable transcription factor, involved in regulation of dopamine neuron lineage specification (PubMed:29301976). May play a role in maintaining robustness of the Wnt/beta-catenin asymmetry pathway (PubMed:29301976).</text>
</comment>
<comment type="developmental stage">
    <text evidence="3">Expressed in early larval stages, in head hypodermal cells, head muscle cells, neurons, and ectodermal blast cells along the body (all P and all V cells) and in the tail (PubMed:29301976). Starting in the larval L2 stage, also expressed in P cell-derived ventral cord motor neurons (PubMed:29301976).</text>
</comment>
<comment type="domain">
    <text evidence="3">Third 'degenerate' zinc-finger domain essential for function.</text>
</comment>
<evidence type="ECO:0000255" key="1">
    <source>
        <dbReference type="PROSITE-ProRule" id="PRU00042"/>
    </source>
</evidence>
<evidence type="ECO:0000256" key="2">
    <source>
        <dbReference type="SAM" id="MobiDB-lite"/>
    </source>
</evidence>
<evidence type="ECO:0000269" key="3">
    <source>
    </source>
</evidence>
<evidence type="ECO:0000305" key="4"/>
<evidence type="ECO:0000312" key="5">
    <source>
        <dbReference type="Proteomes" id="UP000001940"/>
    </source>
</evidence>
<evidence type="ECO:0000312" key="6">
    <source>
        <dbReference type="WormBase" id="W06H12.1"/>
    </source>
</evidence>
<protein>
    <recommendedName>
        <fullName evidence="4">Zinc finger protein ztf-6</fullName>
    </recommendedName>
    <alternativeName>
        <fullName evidence="6">Zinc finger putative transcription factor 6</fullName>
    </alternativeName>
</protein>
<reference evidence="5" key="1">
    <citation type="journal article" date="1998" name="Science">
        <title>Genome sequence of the nematode C. elegans: a platform for investigating biology.</title>
        <authorList>
            <consortium name="The C. elegans sequencing consortium"/>
        </authorList>
    </citation>
    <scope>NUCLEOTIDE SEQUENCE [LARGE SCALE GENOMIC DNA]</scope>
    <source>
        <strain evidence="5">Bristol N2</strain>
    </source>
</reference>
<reference evidence="4" key="2">
    <citation type="journal article" date="2018" name="G3 (Bethesda)">
        <title>A Caenorhabditis elegans Zinc Finger Transcription Factor, ztf-6, Required for the Specification of a Dopamine Neuron-Producing Lineage.</title>
        <authorList>
            <person name="Doitsidou M."/>
            <person name="Minevich G."/>
            <person name="Kroll J.R."/>
            <person name="Soete G."/>
            <person name="Gowtham S."/>
            <person name="Korswagen H.C."/>
            <person name="Sebastiaan van Zon J."/>
            <person name="Hobert O."/>
        </authorList>
    </citation>
    <scope>FUNCTION</scope>
    <scope>DEVELOPMENTAL STAGE</scope>
    <scope>DOMAIN</scope>
    <scope>MUTAGENESIS OF 432-ARG--PRO-480 AND CYS-441</scope>
</reference>
<name>ZTF6_CAEEL</name>
<dbReference type="EMBL" id="BX284601">
    <property type="protein sequence ID" value="CAB04928.2"/>
    <property type="molecule type" value="Genomic_DNA"/>
</dbReference>
<dbReference type="PIR" id="B87918">
    <property type="entry name" value="B87918"/>
</dbReference>
<dbReference type="PIR" id="T26250">
    <property type="entry name" value="T26250"/>
</dbReference>
<dbReference type="RefSeq" id="NP_492877.1">
    <property type="nucleotide sequence ID" value="NM_060476.7"/>
</dbReference>
<dbReference type="FunCoup" id="G5EC77">
    <property type="interactions" value="1145"/>
</dbReference>
<dbReference type="IntAct" id="G5EC77">
    <property type="interactions" value="3"/>
</dbReference>
<dbReference type="STRING" id="6239.W06H12.1.1"/>
<dbReference type="PaxDb" id="6239-W06H12.1"/>
<dbReference type="PeptideAtlas" id="G5EC77"/>
<dbReference type="EnsemblMetazoa" id="W06H12.1.1">
    <property type="protein sequence ID" value="W06H12.1.1"/>
    <property type="gene ID" value="WBGene00012317"/>
</dbReference>
<dbReference type="GeneID" id="173014"/>
<dbReference type="KEGG" id="cel:CELE_W06H12.1"/>
<dbReference type="AGR" id="WB:WBGene00012317"/>
<dbReference type="CTD" id="173014"/>
<dbReference type="WormBase" id="W06H12.1">
    <property type="protein sequence ID" value="CE25145"/>
    <property type="gene ID" value="WBGene00012317"/>
    <property type="gene designation" value="ztf-6"/>
</dbReference>
<dbReference type="eggNOG" id="ENOG502RWTR">
    <property type="taxonomic scope" value="Eukaryota"/>
</dbReference>
<dbReference type="HOGENOM" id="CLU_604430_0_0_1"/>
<dbReference type="InParanoid" id="G5EC77"/>
<dbReference type="OMA" id="NGAGYIC"/>
<dbReference type="OrthoDB" id="6077919at2759"/>
<dbReference type="PRO" id="PR:G5EC77"/>
<dbReference type="Proteomes" id="UP000001940">
    <property type="component" value="Chromosome I"/>
</dbReference>
<dbReference type="Bgee" id="WBGene00012317">
    <property type="expression patterns" value="Expressed in pharyngeal muscle cell (C elegans) and 3 other cell types or tissues"/>
</dbReference>
<dbReference type="GO" id="GO:0005694">
    <property type="term" value="C:chromosome"/>
    <property type="evidence" value="ECO:0000318"/>
    <property type="project" value="GO_Central"/>
</dbReference>
<dbReference type="GO" id="GO:0043035">
    <property type="term" value="F:chromatin insulator sequence binding"/>
    <property type="evidence" value="ECO:0000318"/>
    <property type="project" value="GO_Central"/>
</dbReference>
<dbReference type="GO" id="GO:0008270">
    <property type="term" value="F:zinc ion binding"/>
    <property type="evidence" value="ECO:0007669"/>
    <property type="project" value="UniProtKB-KW"/>
</dbReference>
<dbReference type="GO" id="GO:0098722">
    <property type="term" value="P:asymmetric stem cell division"/>
    <property type="evidence" value="ECO:0000315"/>
    <property type="project" value="UniProtKB"/>
</dbReference>
<dbReference type="GO" id="GO:0009957">
    <property type="term" value="P:epidermal cell fate specification"/>
    <property type="evidence" value="ECO:0000315"/>
    <property type="project" value="UniProtKB"/>
</dbReference>
<dbReference type="GO" id="GO:0048665">
    <property type="term" value="P:neuron fate specification"/>
    <property type="evidence" value="ECO:0000315"/>
    <property type="project" value="UniProtKB"/>
</dbReference>
<dbReference type="GO" id="GO:0010628">
    <property type="term" value="P:positive regulation of gene expression"/>
    <property type="evidence" value="ECO:0000315"/>
    <property type="project" value="UniProtKB"/>
</dbReference>
<dbReference type="GO" id="GO:0006357">
    <property type="term" value="P:regulation of transcription by RNA polymerase II"/>
    <property type="evidence" value="ECO:0000318"/>
    <property type="project" value="GO_Central"/>
</dbReference>
<dbReference type="Gene3D" id="3.30.160.60">
    <property type="entry name" value="Classic Zinc Finger"/>
    <property type="match status" value="2"/>
</dbReference>
<dbReference type="InterPro" id="IPR036236">
    <property type="entry name" value="Znf_C2H2_sf"/>
</dbReference>
<dbReference type="InterPro" id="IPR013087">
    <property type="entry name" value="Znf_C2H2_type"/>
</dbReference>
<dbReference type="PANTHER" id="PTHR23235">
    <property type="entry name" value="KRUEPPEL-LIKE TRANSCRIPTION FACTOR"/>
    <property type="match status" value="1"/>
</dbReference>
<dbReference type="PANTHER" id="PTHR23235:SF120">
    <property type="entry name" value="KRUPPEL-LIKE FACTOR 15"/>
    <property type="match status" value="1"/>
</dbReference>
<dbReference type="Pfam" id="PF00096">
    <property type="entry name" value="zf-C2H2"/>
    <property type="match status" value="1"/>
</dbReference>
<dbReference type="SMART" id="SM00355">
    <property type="entry name" value="ZnF_C2H2"/>
    <property type="match status" value="3"/>
</dbReference>
<dbReference type="SUPFAM" id="SSF57667">
    <property type="entry name" value="beta-beta-alpha zinc fingers"/>
    <property type="match status" value="2"/>
</dbReference>
<dbReference type="PROSITE" id="PS00028">
    <property type="entry name" value="ZINC_FINGER_C2H2_1"/>
    <property type="match status" value="2"/>
</dbReference>
<dbReference type="PROSITE" id="PS50157">
    <property type="entry name" value="ZINC_FINGER_C2H2_2"/>
    <property type="match status" value="2"/>
</dbReference>
<keyword id="KW-0479">Metal-binding</keyword>
<keyword id="KW-1185">Reference proteome</keyword>
<keyword id="KW-0677">Repeat</keyword>
<keyword id="KW-0804">Transcription</keyword>
<keyword id="KW-0805">Transcription regulation</keyword>
<keyword id="KW-0862">Zinc</keyword>
<keyword id="KW-0863">Zinc-finger</keyword>
<gene>
    <name evidence="6" type="primary">ztf-6</name>
    <name evidence="6" type="synonym">dopy-1</name>
    <name evidence="6" type="ORF">W06H12.1</name>
</gene>
<organism evidence="5">
    <name type="scientific">Caenorhabditis elegans</name>
    <dbReference type="NCBI Taxonomy" id="6239"/>
    <lineage>
        <taxon>Eukaryota</taxon>
        <taxon>Metazoa</taxon>
        <taxon>Ecdysozoa</taxon>
        <taxon>Nematoda</taxon>
        <taxon>Chromadorea</taxon>
        <taxon>Rhabditida</taxon>
        <taxon>Rhabditina</taxon>
        <taxon>Rhabditomorpha</taxon>
        <taxon>Rhabditoidea</taxon>
        <taxon>Rhabditidae</taxon>
        <taxon>Peloderinae</taxon>
        <taxon>Caenorhabditis</taxon>
    </lineage>
</organism>
<proteinExistence type="evidence at protein level"/>
<accession>G5EC77</accession>
<feature type="chain" id="PRO_0000453526" description="Zinc finger protein ztf-6">
    <location>
        <begin position="1"/>
        <end position="480"/>
    </location>
</feature>
<feature type="zinc finger region" description="C2H2-type 1" evidence="1">
    <location>
        <begin position="359"/>
        <end position="383"/>
    </location>
</feature>
<feature type="zinc finger region" description="C2H2-type 2" evidence="1">
    <location>
        <begin position="388"/>
        <end position="410"/>
    </location>
</feature>
<feature type="zinc finger region" description="C2H2-type 3; degenerate" evidence="1">
    <location>
        <begin position="416"/>
        <end position="441"/>
    </location>
</feature>
<feature type="region of interest" description="Disordered" evidence="2">
    <location>
        <begin position="92"/>
        <end position="160"/>
    </location>
</feature>
<feature type="region of interest" description="Disordered" evidence="2">
    <location>
        <begin position="174"/>
        <end position="198"/>
    </location>
</feature>
<feature type="region of interest" description="Disordered" evidence="2">
    <location>
        <begin position="282"/>
        <end position="307"/>
    </location>
</feature>
<feature type="region of interest" description="Disordered" evidence="2">
    <location>
        <begin position="328"/>
        <end position="351"/>
    </location>
</feature>
<feature type="region of interest" description="Disordered" evidence="2">
    <location>
        <begin position="461"/>
        <end position="480"/>
    </location>
</feature>
<feature type="compositionally biased region" description="Low complexity" evidence="2">
    <location>
        <begin position="95"/>
        <end position="105"/>
    </location>
</feature>
<feature type="compositionally biased region" description="Low complexity" evidence="2">
    <location>
        <begin position="131"/>
        <end position="145"/>
    </location>
</feature>
<feature type="compositionally biased region" description="Low complexity" evidence="2">
    <location>
        <begin position="174"/>
        <end position="187"/>
    </location>
</feature>
<feature type="compositionally biased region" description="Low complexity" evidence="2">
    <location>
        <begin position="286"/>
        <end position="296"/>
    </location>
</feature>
<feature type="mutagenesis site" description="In ot274; expression of the dopamine transporter dat-1 abolished in the PDE mechanosensory neurons forming the posterior deirid ('postdeirid') sensillum. Ectopic formation of CEPV mechanosensory neurons." evidence="3">
    <location>
        <begin position="432"/>
        <end position="480"/>
    </location>
</feature>
<feature type="mutagenesis site" description="In ot280; expression of the dopamine transporter dat-1 abolished in the PDE mechanosensory neurons forming the posterior deirid ('postdeirid') sensillum. Ectopic formation of CEPV mechanosensory neurons." evidence="3">
    <original>C</original>
    <variation>Y</variation>
    <location>
        <position position="441"/>
    </location>
</feature>
<sequence length="480" mass="51425">MGPDTTSERVSEDLMQAVTCLKRVMVGMKSNGTDYVQEQTPSNSTTVICTLVKITGALERCIESNKAMNDVLNGKMKCTTCGATSVGLLSDCHDSATSTTTTVSHRSSEEPPRRKPSAAGGDHDDEELECSSIESRSIRSVSSSVHTSAEDDETNQTMMVPTDVADVINAIVAGTNGSSNSNTTSSSKSPQEEEEEHDLVMKSILSTTTSTSNTKLELSEKLENPLQDTALLDQFLQASLLGQTPTVTPASEENEEDKEQNAVLTSFLQILFANQQAGNAILDAGSSENDGSTSSSQPSPPADPTASLDSLAMFESLLAESMNGNVLDANTSSADQKAAARKRKSTPMKVPKSENGAGYICPMDGCNKVFKEKGSVHRHFVTHIGMRFNCDKCKASYTQKHALMLHQKIHANPDAYQCRGCGTNYTTQNGLRLHRQRNPACMEVSNALEFNTSLNTSISEALSGPLSKNSSPTKQMVSAP</sequence>